<gene>
    <name type="primary">GUA1</name>
    <name type="ordered locus">CAALFM_C109490CA</name>
    <name type="ORF">CaO19.12276</name>
    <name type="ORF">CaO19.4813</name>
</gene>
<keyword id="KW-0067">ATP-binding</keyword>
<keyword id="KW-0963">Cytoplasm</keyword>
<keyword id="KW-0315">Glutamine amidotransferase</keyword>
<keyword id="KW-0332">GMP biosynthesis</keyword>
<keyword id="KW-0436">Ligase</keyword>
<keyword id="KW-0460">Magnesium</keyword>
<keyword id="KW-0547">Nucleotide-binding</keyword>
<keyword id="KW-0658">Purine biosynthesis</keyword>
<keyword id="KW-1185">Reference proteome</keyword>
<comment type="function">
    <text evidence="1">Catalyzes the conversion of xanthine monophosphate (XMP) to GMP in the presence of glutamine and ATP through an adenyl-XMP intermediate.</text>
</comment>
<comment type="catalytic activity">
    <reaction evidence="1">
        <text>XMP + L-glutamine + ATP + H2O = GMP + L-glutamate + AMP + diphosphate + 2 H(+)</text>
        <dbReference type="Rhea" id="RHEA:11680"/>
        <dbReference type="ChEBI" id="CHEBI:15377"/>
        <dbReference type="ChEBI" id="CHEBI:15378"/>
        <dbReference type="ChEBI" id="CHEBI:29985"/>
        <dbReference type="ChEBI" id="CHEBI:30616"/>
        <dbReference type="ChEBI" id="CHEBI:33019"/>
        <dbReference type="ChEBI" id="CHEBI:57464"/>
        <dbReference type="ChEBI" id="CHEBI:58115"/>
        <dbReference type="ChEBI" id="CHEBI:58359"/>
        <dbReference type="ChEBI" id="CHEBI:456215"/>
        <dbReference type="EC" id="6.3.5.2"/>
    </reaction>
</comment>
<comment type="cofactor">
    <cofactor evidence="3">
        <name>Mg(2+)</name>
        <dbReference type="ChEBI" id="CHEBI:18420"/>
    </cofactor>
</comment>
<comment type="pathway">
    <text evidence="1">Purine metabolism; GMP biosynthesis; GMP from XMP (L-Gln route): step 1/1.</text>
</comment>
<comment type="subunit">
    <text evidence="3">Homodimer.</text>
</comment>
<comment type="subcellular location">
    <subcellularLocation>
        <location evidence="4">Cytoplasm</location>
        <location evidence="4">Cytosol</location>
    </subcellularLocation>
</comment>
<proteinExistence type="inferred from homology"/>
<sequence length="530" mass="58813">MSANIDDVPIEVSKVFDTILVLDFGSQYSHLITRRLREFNVYAEMLPCTQKIAELSWKPKGIILSGGPYSVYAEDAPHVDHDIFKLGVPILGICYGMQELAWINGKGVARGDKREYGPATLNVEDPECALFKGVDHSQVWMSHGDKLHALPTGFKVVATSDNSPFCGISNESEHIYGIQFHPEVTHTVQGKKLLKNFAVDICQAKTNWSMENFIDTEIARIKKLVGPTAEVIGAVSGGVDSTVGAKIMKEAIGDRFHAIYVDNGVMRKNETESVKKTLDEGLGINLTVVDAGDLFLGRLKGVTDPEKKRKIIGNTFIHVFEEEAAKIKPRDGSEIEYLLQGTLYPDVIESISFKGPSQTIKTHHNVGGLLEDMKLKLIEPLRELFKDEVRHLGELLGVPEDLVWRHPFPGPGLAIRVLGEVTKEQVKIAREADAIFIEEIKKAGLYRQISQAFAALLPVKSVGVMGDQRTYEQVIALRAIETLDFMTADWFIFEAAFLKKVASRIVNEVDGVARVTYDITSKPPATVEWE</sequence>
<reference key="1">
    <citation type="journal article" date="2004" name="Proc. Natl. Acad. Sci. U.S.A.">
        <title>The diploid genome sequence of Candida albicans.</title>
        <authorList>
            <person name="Jones T."/>
            <person name="Federspiel N.A."/>
            <person name="Chibana H."/>
            <person name="Dungan J."/>
            <person name="Kalman S."/>
            <person name="Magee B.B."/>
            <person name="Newport G."/>
            <person name="Thorstenson Y.R."/>
            <person name="Agabian N."/>
            <person name="Magee P.T."/>
            <person name="Davis R.W."/>
            <person name="Scherer S."/>
        </authorList>
    </citation>
    <scope>NUCLEOTIDE SEQUENCE [LARGE SCALE GENOMIC DNA]</scope>
    <source>
        <strain>SC5314 / ATCC MYA-2876</strain>
    </source>
</reference>
<reference key="2">
    <citation type="journal article" date="2007" name="Genome Biol.">
        <title>Assembly of the Candida albicans genome into sixteen supercontigs aligned on the eight chromosomes.</title>
        <authorList>
            <person name="van het Hoog M."/>
            <person name="Rast T.J."/>
            <person name="Martchenko M."/>
            <person name="Grindle S."/>
            <person name="Dignard D."/>
            <person name="Hogues H."/>
            <person name="Cuomo C."/>
            <person name="Berriman M."/>
            <person name="Scherer S."/>
            <person name="Magee B.B."/>
            <person name="Whiteway M."/>
            <person name="Chibana H."/>
            <person name="Nantel A."/>
            <person name="Magee P.T."/>
        </authorList>
    </citation>
    <scope>GENOME REANNOTATION</scope>
    <source>
        <strain>SC5314 / ATCC MYA-2876</strain>
    </source>
</reference>
<reference key="3">
    <citation type="journal article" date="2013" name="Genome Biol.">
        <title>Assembly of a phased diploid Candida albicans genome facilitates allele-specific measurements and provides a simple model for repeat and indel structure.</title>
        <authorList>
            <person name="Muzzey D."/>
            <person name="Schwartz K."/>
            <person name="Weissman J.S."/>
            <person name="Sherlock G."/>
        </authorList>
    </citation>
    <scope>NUCLEOTIDE SEQUENCE [LARGE SCALE GENOMIC DNA]</scope>
    <scope>GENOME REANNOTATION</scope>
    <source>
        <strain>SC5314 / ATCC MYA-2876</strain>
    </source>
</reference>
<dbReference type="EC" id="6.3.5.2" evidence="1"/>
<dbReference type="EMBL" id="CP017623">
    <property type="protein sequence ID" value="AOW26582.1"/>
    <property type="molecule type" value="Genomic_DNA"/>
</dbReference>
<dbReference type="RefSeq" id="XP_723499.1">
    <property type="nucleotide sequence ID" value="XM_718406.2"/>
</dbReference>
<dbReference type="SMR" id="Q5APF2"/>
<dbReference type="BioGRID" id="1217857">
    <property type="interactions" value="1"/>
</dbReference>
<dbReference type="FunCoup" id="Q5APF2">
    <property type="interactions" value="1129"/>
</dbReference>
<dbReference type="STRING" id="237561.Q5APF2"/>
<dbReference type="EnsemblFungi" id="C1_09490C_A-T">
    <property type="protein sequence ID" value="C1_09490C_A-T-p1"/>
    <property type="gene ID" value="C1_09490C_A"/>
</dbReference>
<dbReference type="GeneID" id="3634763"/>
<dbReference type="KEGG" id="cal:CAALFM_C109490CA"/>
<dbReference type="CGD" id="CAL0000179678">
    <property type="gene designation" value="GUA1"/>
</dbReference>
<dbReference type="VEuPathDB" id="FungiDB:C1_09490C_A"/>
<dbReference type="eggNOG" id="KOG1622">
    <property type="taxonomic scope" value="Eukaryota"/>
</dbReference>
<dbReference type="HOGENOM" id="CLU_014340_0_5_1"/>
<dbReference type="InParanoid" id="Q5APF2"/>
<dbReference type="OMA" id="IWQSFAV"/>
<dbReference type="OrthoDB" id="1724632at2759"/>
<dbReference type="UniPathway" id="UPA00189">
    <property type="reaction ID" value="UER00296"/>
</dbReference>
<dbReference type="PRO" id="PR:Q5APF2"/>
<dbReference type="Proteomes" id="UP000000559">
    <property type="component" value="Chromosome 1"/>
</dbReference>
<dbReference type="GO" id="GO:0005829">
    <property type="term" value="C:cytosol"/>
    <property type="evidence" value="ECO:0000318"/>
    <property type="project" value="GO_Central"/>
</dbReference>
<dbReference type="GO" id="GO:0005524">
    <property type="term" value="F:ATP binding"/>
    <property type="evidence" value="ECO:0007669"/>
    <property type="project" value="UniProtKB-KW"/>
</dbReference>
<dbReference type="GO" id="GO:0003922">
    <property type="term" value="F:GMP synthase (glutamine-hydrolyzing) activity"/>
    <property type="evidence" value="ECO:0000250"/>
    <property type="project" value="UniProtKB"/>
</dbReference>
<dbReference type="GO" id="GO:0003921">
    <property type="term" value="F:GMP synthase activity"/>
    <property type="evidence" value="ECO:0000318"/>
    <property type="project" value="GO_Central"/>
</dbReference>
<dbReference type="GO" id="GO:0006177">
    <property type="term" value="P:GMP biosynthetic process"/>
    <property type="evidence" value="ECO:0000250"/>
    <property type="project" value="UniProtKB"/>
</dbReference>
<dbReference type="GO" id="GO:0046037">
    <property type="term" value="P:GMP metabolic process"/>
    <property type="evidence" value="ECO:0000315"/>
    <property type="project" value="CGD"/>
</dbReference>
<dbReference type="CDD" id="cd01742">
    <property type="entry name" value="GATase1_GMP_Synthase"/>
    <property type="match status" value="1"/>
</dbReference>
<dbReference type="CDD" id="cd01997">
    <property type="entry name" value="GMP_synthase_C"/>
    <property type="match status" value="1"/>
</dbReference>
<dbReference type="FunFam" id="3.30.300.10:FF:000002">
    <property type="entry name" value="GMP synthase [glutamine-hydrolyzing]"/>
    <property type="match status" value="1"/>
</dbReference>
<dbReference type="FunFam" id="3.40.50.620:FF:000001">
    <property type="entry name" value="GMP synthase [glutamine-hydrolyzing]"/>
    <property type="match status" value="1"/>
</dbReference>
<dbReference type="FunFam" id="3.40.50.880:FF:000001">
    <property type="entry name" value="GMP synthase [glutamine-hydrolyzing]"/>
    <property type="match status" value="1"/>
</dbReference>
<dbReference type="Gene3D" id="3.30.300.10">
    <property type="match status" value="1"/>
</dbReference>
<dbReference type="Gene3D" id="3.40.50.880">
    <property type="match status" value="1"/>
</dbReference>
<dbReference type="Gene3D" id="3.40.50.620">
    <property type="entry name" value="HUPs"/>
    <property type="match status" value="1"/>
</dbReference>
<dbReference type="HAMAP" id="MF_00344">
    <property type="entry name" value="GMP_synthase"/>
    <property type="match status" value="1"/>
</dbReference>
<dbReference type="InterPro" id="IPR029062">
    <property type="entry name" value="Class_I_gatase-like"/>
</dbReference>
<dbReference type="InterPro" id="IPR017926">
    <property type="entry name" value="GATASE"/>
</dbReference>
<dbReference type="InterPro" id="IPR001674">
    <property type="entry name" value="GMP_synth_C"/>
</dbReference>
<dbReference type="InterPro" id="IPR004739">
    <property type="entry name" value="GMP_synth_GATase"/>
</dbReference>
<dbReference type="InterPro" id="IPR022955">
    <property type="entry name" value="GMP_synthase"/>
</dbReference>
<dbReference type="InterPro" id="IPR025777">
    <property type="entry name" value="GMPS_ATP_PPase_dom"/>
</dbReference>
<dbReference type="InterPro" id="IPR022310">
    <property type="entry name" value="NAD/GMP_synthase"/>
</dbReference>
<dbReference type="InterPro" id="IPR014729">
    <property type="entry name" value="Rossmann-like_a/b/a_fold"/>
</dbReference>
<dbReference type="NCBIfam" id="TIGR00884">
    <property type="entry name" value="guaA_Cterm"/>
    <property type="match status" value="1"/>
</dbReference>
<dbReference type="NCBIfam" id="TIGR00888">
    <property type="entry name" value="guaA_Nterm"/>
    <property type="match status" value="1"/>
</dbReference>
<dbReference type="NCBIfam" id="NF000848">
    <property type="entry name" value="PRK00074.1"/>
    <property type="match status" value="1"/>
</dbReference>
<dbReference type="PANTHER" id="PTHR11922:SF2">
    <property type="entry name" value="GMP SYNTHASE [GLUTAMINE-HYDROLYZING]"/>
    <property type="match status" value="1"/>
</dbReference>
<dbReference type="PANTHER" id="PTHR11922">
    <property type="entry name" value="GMP SYNTHASE-RELATED"/>
    <property type="match status" value="1"/>
</dbReference>
<dbReference type="Pfam" id="PF00117">
    <property type="entry name" value="GATase"/>
    <property type="match status" value="1"/>
</dbReference>
<dbReference type="Pfam" id="PF00958">
    <property type="entry name" value="GMP_synt_C"/>
    <property type="match status" value="1"/>
</dbReference>
<dbReference type="Pfam" id="PF02540">
    <property type="entry name" value="NAD_synthase"/>
    <property type="match status" value="1"/>
</dbReference>
<dbReference type="PRINTS" id="PR00097">
    <property type="entry name" value="ANTSNTHASEII"/>
</dbReference>
<dbReference type="PRINTS" id="PR00096">
    <property type="entry name" value="GATASE"/>
</dbReference>
<dbReference type="SUPFAM" id="SSF52402">
    <property type="entry name" value="Adenine nucleotide alpha hydrolases-like"/>
    <property type="match status" value="1"/>
</dbReference>
<dbReference type="SUPFAM" id="SSF52317">
    <property type="entry name" value="Class I glutamine amidotransferase-like"/>
    <property type="match status" value="1"/>
</dbReference>
<dbReference type="SUPFAM" id="SSF54810">
    <property type="entry name" value="GMP synthetase C-terminal dimerisation domain"/>
    <property type="match status" value="1"/>
</dbReference>
<dbReference type="PROSITE" id="PS51273">
    <property type="entry name" value="GATASE_TYPE_1"/>
    <property type="match status" value="1"/>
</dbReference>
<dbReference type="PROSITE" id="PS51553">
    <property type="entry name" value="GMPS_ATP_PPASE"/>
    <property type="match status" value="1"/>
</dbReference>
<organism>
    <name type="scientific">Candida albicans (strain SC5314 / ATCC MYA-2876)</name>
    <name type="common">Yeast</name>
    <dbReference type="NCBI Taxonomy" id="237561"/>
    <lineage>
        <taxon>Eukaryota</taxon>
        <taxon>Fungi</taxon>
        <taxon>Dikarya</taxon>
        <taxon>Ascomycota</taxon>
        <taxon>Saccharomycotina</taxon>
        <taxon>Pichiomycetes</taxon>
        <taxon>Debaryomycetaceae</taxon>
        <taxon>Candida/Lodderomyces clade</taxon>
        <taxon>Candida</taxon>
    </lineage>
</organism>
<feature type="chain" id="PRO_0000286146" description="GMP synthase [glutamine-hydrolyzing]">
    <location>
        <begin position="1"/>
        <end position="530"/>
    </location>
</feature>
<feature type="domain" description="Glutamine amidotransferase type-1" evidence="5">
    <location>
        <begin position="18"/>
        <end position="207"/>
    </location>
</feature>
<feature type="domain" description="GMPS ATP-PPase" evidence="6">
    <location>
        <begin position="208"/>
        <end position="405"/>
    </location>
</feature>
<feature type="active site" description="Nucleophile" evidence="5">
    <location>
        <position position="94"/>
    </location>
</feature>
<feature type="active site" evidence="5">
    <location>
        <position position="181"/>
    </location>
</feature>
<feature type="active site" evidence="5">
    <location>
        <position position="183"/>
    </location>
</feature>
<feature type="binding site" evidence="6">
    <location>
        <begin position="236"/>
        <end position="242"/>
    </location>
    <ligand>
        <name>ATP</name>
        <dbReference type="ChEBI" id="CHEBI:30616"/>
    </ligand>
</feature>
<feature type="binding site" evidence="2">
    <location>
        <position position="309"/>
    </location>
    <ligand>
        <name>XMP</name>
        <dbReference type="ChEBI" id="CHEBI:57464"/>
    </ligand>
</feature>
<feature type="binding site" evidence="2">
    <location>
        <position position="467"/>
    </location>
    <ligand>
        <name>XMP</name>
        <dbReference type="ChEBI" id="CHEBI:57464"/>
    </ligand>
</feature>
<feature type="binding site" evidence="2">
    <location>
        <position position="522"/>
    </location>
    <ligand>
        <name>XMP</name>
        <dbReference type="ChEBI" id="CHEBI:57464"/>
    </ligand>
</feature>
<feature type="binding site" evidence="2">
    <location>
        <position position="528"/>
    </location>
    <ligand>
        <name>XMP</name>
        <dbReference type="ChEBI" id="CHEBI:57464"/>
    </ligand>
</feature>
<evidence type="ECO:0000250" key="1">
    <source>
        <dbReference type="UniProtKB" id="P38625"/>
    </source>
</evidence>
<evidence type="ECO:0000250" key="2">
    <source>
        <dbReference type="UniProtKB" id="P49915"/>
    </source>
</evidence>
<evidence type="ECO:0000250" key="3">
    <source>
        <dbReference type="UniProtKB" id="Q4WFT3"/>
    </source>
</evidence>
<evidence type="ECO:0000250" key="4">
    <source>
        <dbReference type="UniProtKB" id="Q9P772"/>
    </source>
</evidence>
<evidence type="ECO:0000255" key="5">
    <source>
        <dbReference type="PROSITE-ProRule" id="PRU00605"/>
    </source>
</evidence>
<evidence type="ECO:0000255" key="6">
    <source>
        <dbReference type="PROSITE-ProRule" id="PRU00886"/>
    </source>
</evidence>
<accession>Q5APF2</accession>
<accession>A0A1D8PEL6</accession>
<name>GUAA_CANAL</name>
<protein>
    <recommendedName>
        <fullName>GMP synthase [glutamine-hydrolyzing]</fullName>
        <ecNumber evidence="1">6.3.5.2</ecNumber>
    </recommendedName>
    <alternativeName>
        <fullName>GMP synthetase</fullName>
    </alternativeName>
    <alternativeName>
        <fullName>Glutamine amidotransferase</fullName>
    </alternativeName>
</protein>